<accession>Q3B426</accession>
<reference key="1">
    <citation type="submission" date="2005-08" db="EMBL/GenBank/DDBJ databases">
        <title>Complete sequence of Pelodictyon luteolum DSM 273.</title>
        <authorList>
            <consortium name="US DOE Joint Genome Institute"/>
            <person name="Copeland A."/>
            <person name="Lucas S."/>
            <person name="Lapidus A."/>
            <person name="Barry K."/>
            <person name="Detter J.C."/>
            <person name="Glavina T."/>
            <person name="Hammon N."/>
            <person name="Israni S."/>
            <person name="Pitluck S."/>
            <person name="Bryant D."/>
            <person name="Schmutz J."/>
            <person name="Larimer F."/>
            <person name="Land M."/>
            <person name="Kyrpides N."/>
            <person name="Ivanova N."/>
            <person name="Richardson P."/>
        </authorList>
    </citation>
    <scope>NUCLEOTIDE SEQUENCE [LARGE SCALE GENOMIC DNA]</scope>
    <source>
        <strain>DSM 273 / BCRC 81028 / 2530</strain>
    </source>
</reference>
<dbReference type="EC" id="4.3.2.1" evidence="1"/>
<dbReference type="EMBL" id="CP000096">
    <property type="protein sequence ID" value="ABB23905.1"/>
    <property type="molecule type" value="Genomic_DNA"/>
</dbReference>
<dbReference type="RefSeq" id="WP_011357777.1">
    <property type="nucleotide sequence ID" value="NC_007512.1"/>
</dbReference>
<dbReference type="SMR" id="Q3B426"/>
<dbReference type="STRING" id="319225.Plut_1043"/>
<dbReference type="KEGG" id="plt:Plut_1043"/>
<dbReference type="eggNOG" id="COG0165">
    <property type="taxonomic scope" value="Bacteria"/>
</dbReference>
<dbReference type="HOGENOM" id="CLU_027272_2_3_10"/>
<dbReference type="OrthoDB" id="9769623at2"/>
<dbReference type="UniPathway" id="UPA00068">
    <property type="reaction ID" value="UER00114"/>
</dbReference>
<dbReference type="Proteomes" id="UP000002709">
    <property type="component" value="Chromosome"/>
</dbReference>
<dbReference type="GO" id="GO:0005829">
    <property type="term" value="C:cytosol"/>
    <property type="evidence" value="ECO:0007669"/>
    <property type="project" value="TreeGrafter"/>
</dbReference>
<dbReference type="GO" id="GO:0004056">
    <property type="term" value="F:argininosuccinate lyase activity"/>
    <property type="evidence" value="ECO:0007669"/>
    <property type="project" value="UniProtKB-UniRule"/>
</dbReference>
<dbReference type="GO" id="GO:0042450">
    <property type="term" value="P:arginine biosynthetic process via ornithine"/>
    <property type="evidence" value="ECO:0007669"/>
    <property type="project" value="InterPro"/>
</dbReference>
<dbReference type="GO" id="GO:0006526">
    <property type="term" value="P:L-arginine biosynthetic process"/>
    <property type="evidence" value="ECO:0007669"/>
    <property type="project" value="UniProtKB-UniRule"/>
</dbReference>
<dbReference type="CDD" id="cd01359">
    <property type="entry name" value="Argininosuccinate_lyase"/>
    <property type="match status" value="1"/>
</dbReference>
<dbReference type="FunFam" id="1.10.275.10:FF:000002">
    <property type="entry name" value="Argininosuccinate lyase"/>
    <property type="match status" value="1"/>
</dbReference>
<dbReference type="FunFam" id="1.10.40.30:FF:000001">
    <property type="entry name" value="Argininosuccinate lyase"/>
    <property type="match status" value="1"/>
</dbReference>
<dbReference type="FunFam" id="1.20.200.10:FF:000015">
    <property type="entry name" value="argininosuccinate lyase isoform X2"/>
    <property type="match status" value="1"/>
</dbReference>
<dbReference type="Gene3D" id="1.10.40.30">
    <property type="entry name" value="Fumarase/aspartase (C-terminal domain)"/>
    <property type="match status" value="1"/>
</dbReference>
<dbReference type="Gene3D" id="1.20.200.10">
    <property type="entry name" value="Fumarase/aspartase (Central domain)"/>
    <property type="match status" value="1"/>
</dbReference>
<dbReference type="Gene3D" id="1.10.275.10">
    <property type="entry name" value="Fumarase/aspartase (N-terminal domain)"/>
    <property type="match status" value="1"/>
</dbReference>
<dbReference type="HAMAP" id="MF_00006">
    <property type="entry name" value="Arg_succ_lyase"/>
    <property type="match status" value="1"/>
</dbReference>
<dbReference type="InterPro" id="IPR029419">
    <property type="entry name" value="Arg_succ_lyase_C"/>
</dbReference>
<dbReference type="InterPro" id="IPR009049">
    <property type="entry name" value="Argininosuccinate_lyase"/>
</dbReference>
<dbReference type="InterPro" id="IPR024083">
    <property type="entry name" value="Fumarase/histidase_N"/>
</dbReference>
<dbReference type="InterPro" id="IPR020557">
    <property type="entry name" value="Fumarate_lyase_CS"/>
</dbReference>
<dbReference type="InterPro" id="IPR000362">
    <property type="entry name" value="Fumarate_lyase_fam"/>
</dbReference>
<dbReference type="InterPro" id="IPR022761">
    <property type="entry name" value="Fumarate_lyase_N"/>
</dbReference>
<dbReference type="InterPro" id="IPR008948">
    <property type="entry name" value="L-Aspartase-like"/>
</dbReference>
<dbReference type="NCBIfam" id="TIGR00838">
    <property type="entry name" value="argH"/>
    <property type="match status" value="1"/>
</dbReference>
<dbReference type="PANTHER" id="PTHR43814">
    <property type="entry name" value="ARGININOSUCCINATE LYASE"/>
    <property type="match status" value="1"/>
</dbReference>
<dbReference type="PANTHER" id="PTHR43814:SF1">
    <property type="entry name" value="ARGININOSUCCINATE LYASE"/>
    <property type="match status" value="1"/>
</dbReference>
<dbReference type="Pfam" id="PF14698">
    <property type="entry name" value="ASL_C2"/>
    <property type="match status" value="1"/>
</dbReference>
<dbReference type="Pfam" id="PF00206">
    <property type="entry name" value="Lyase_1"/>
    <property type="match status" value="1"/>
</dbReference>
<dbReference type="PRINTS" id="PR00145">
    <property type="entry name" value="ARGSUCLYASE"/>
</dbReference>
<dbReference type="PRINTS" id="PR00149">
    <property type="entry name" value="FUMRATELYASE"/>
</dbReference>
<dbReference type="SUPFAM" id="SSF48557">
    <property type="entry name" value="L-aspartase-like"/>
    <property type="match status" value="1"/>
</dbReference>
<dbReference type="PROSITE" id="PS00163">
    <property type="entry name" value="FUMARATE_LYASES"/>
    <property type="match status" value="1"/>
</dbReference>
<gene>
    <name evidence="1" type="primary">argH</name>
    <name type="ordered locus">Plut_1043</name>
</gene>
<keyword id="KW-0028">Amino-acid biosynthesis</keyword>
<keyword id="KW-0055">Arginine biosynthesis</keyword>
<keyword id="KW-0963">Cytoplasm</keyword>
<keyword id="KW-0456">Lyase</keyword>
<keyword id="KW-1185">Reference proteome</keyword>
<evidence type="ECO:0000255" key="1">
    <source>
        <dbReference type="HAMAP-Rule" id="MF_00006"/>
    </source>
</evidence>
<proteinExistence type="inferred from homology"/>
<feature type="chain" id="PRO_0000240748" description="Argininosuccinate lyase">
    <location>
        <begin position="1"/>
        <end position="461"/>
    </location>
</feature>
<protein>
    <recommendedName>
        <fullName evidence="1">Argininosuccinate lyase</fullName>
        <shortName evidence="1">ASAL</shortName>
        <ecNumber evidence="1">4.3.2.1</ecNumber>
    </recommendedName>
    <alternativeName>
        <fullName evidence="1">Arginosuccinase</fullName>
    </alternativeName>
</protein>
<comment type="catalytic activity">
    <reaction evidence="1">
        <text>2-(N(omega)-L-arginino)succinate = fumarate + L-arginine</text>
        <dbReference type="Rhea" id="RHEA:24020"/>
        <dbReference type="ChEBI" id="CHEBI:29806"/>
        <dbReference type="ChEBI" id="CHEBI:32682"/>
        <dbReference type="ChEBI" id="CHEBI:57472"/>
        <dbReference type="EC" id="4.3.2.1"/>
    </reaction>
</comment>
<comment type="pathway">
    <text evidence="1">Amino-acid biosynthesis; L-arginine biosynthesis; L-arginine from L-ornithine and carbamoyl phosphate: step 3/3.</text>
</comment>
<comment type="subcellular location">
    <subcellularLocation>
        <location evidence="1">Cytoplasm</location>
    </subcellularLocation>
</comment>
<comment type="similarity">
    <text evidence="1">Belongs to the lyase 1 family. Argininosuccinate lyase subfamily.</text>
</comment>
<name>ARLY_CHLL3</name>
<sequence>MSNKKELLWASRFNEPFDSEALRFSSSVHVDGKLYREDIQGSIAHATMLGEEGIISADDAHAICRGLKEIEKEIETGTLVPQWEDEDIHTVIENRLKEKIGAAAGKLHSGRSRNDQVATDTRLYMRERIEELQEALNDLLGTLVQKAETYKDSIIFGYTHLQRAQPISAGHYYLAYFNMFNRDTERLLDLLMRVNVSPLGAAAFAGSTLPLNAGRTAELLDFSELFTNSIDAVSDRDILIEFISCCSIVMMHLSRFCEDIILWSSYEFGYLEISDAFSTGSSIMPQKKNADIAELIRGKTGRVYGDLMAMLTIMKGLPLSYNRDMQEDKPPLFDSAETAISSVTLFNRMLQHTRLREERLKELTKKDLSLATEIAEYLVKKDVPFRDAHRITGKIVSWSIENQTPLPDIPLERFREFSEVFDEGIFTALTPEASITSKKSHGSCSFESVERQIREARELLG</sequence>
<organism>
    <name type="scientific">Chlorobium luteolum (strain DSM 273 / BCRC 81028 / 2530)</name>
    <name type="common">Pelodictyon luteolum</name>
    <dbReference type="NCBI Taxonomy" id="319225"/>
    <lineage>
        <taxon>Bacteria</taxon>
        <taxon>Pseudomonadati</taxon>
        <taxon>Chlorobiota</taxon>
        <taxon>Chlorobiia</taxon>
        <taxon>Chlorobiales</taxon>
        <taxon>Chlorobiaceae</taxon>
        <taxon>Chlorobium/Pelodictyon group</taxon>
        <taxon>Pelodictyon</taxon>
    </lineage>
</organism>